<comment type="subcellular location">
    <subcellularLocation>
        <location evidence="1">Cell membrane</location>
        <topology evidence="1">Lipid-anchor</topology>
    </subcellularLocation>
</comment>
<comment type="similarity">
    <text evidence="1">Belongs to the LpqB lipoprotein family.</text>
</comment>
<sequence length="586" mass="61450">MVRSVFALVFAAVLLGGCASVPSSSAPQAIGTVERPAPSNLPKPIPGMDPDVLLREFLKATADPANRHLAARQFLTQSASNAWDDAGSALLIDHVVFVETRGAERVSATMRADILGSLSDMGVFETAEGELPDPGPIELVKTSGGWRIDRLPNGVFLDWQQFQSTYKRNTLYFADPTGKTVVPDPRYVAVSDHDQLATELVSKLLAGPRPEMAHSVRNLLAPPLRLRGPVTRADGGKSGIGKGYGGARIDLEKLSTTDSHSRQLLAAQIIWTLARADIRGPYVINADGAPLDDRFAEGWTTSDVAATDPGVADGAGAGLHALVGGSLVALDGQRITTVEGAFGRMGDQTGAALSRTGRLVASVVTLRRGAPDVAASLWIGELGAEAVQAADGHNLSRPSWSLDDAVWVVVDTNNVLRAIQEPASGQPARIPVDSTAVSSRFPGAITDLQLSRDGTRAAMVIDGRVILSSVEQTQAGQFALTYPRRLGFGLGTSVVSLSWRTGDDIVVTRNDVGHPVSYVNLDGVNSDAPARGLQIPLFAIAANPSTVYVAGPQGVMMYSASSAEGQQSWAEVPGLMVTGAAPVLPG</sequence>
<reference key="1">
    <citation type="journal article" date="2007" name="Genome Res.">
        <title>Reductive evolution and niche adaptation inferred from the genome of Mycobacterium ulcerans, the causative agent of Buruli ulcer.</title>
        <authorList>
            <person name="Stinear T.P."/>
            <person name="Seemann T."/>
            <person name="Pidot S."/>
            <person name="Frigui W."/>
            <person name="Reysset G."/>
            <person name="Garnier T."/>
            <person name="Meurice G."/>
            <person name="Simon D."/>
            <person name="Bouchier C."/>
            <person name="Ma L."/>
            <person name="Tichit M."/>
            <person name="Porter J.L."/>
            <person name="Ryan J."/>
            <person name="Johnson P.D.R."/>
            <person name="Davies J.K."/>
            <person name="Jenkin G.A."/>
            <person name="Small P.L.C."/>
            <person name="Jones L.M."/>
            <person name="Tekaia F."/>
            <person name="Laval F."/>
            <person name="Daffe M."/>
            <person name="Parkhill J."/>
            <person name="Cole S.T."/>
        </authorList>
    </citation>
    <scope>NUCLEOTIDE SEQUENCE [LARGE SCALE GENOMIC DNA]</scope>
    <source>
        <strain>Agy99</strain>
    </source>
</reference>
<organism>
    <name type="scientific">Mycobacterium ulcerans (strain Agy99)</name>
    <dbReference type="NCBI Taxonomy" id="362242"/>
    <lineage>
        <taxon>Bacteria</taxon>
        <taxon>Bacillati</taxon>
        <taxon>Actinomycetota</taxon>
        <taxon>Actinomycetes</taxon>
        <taxon>Mycobacteriales</taxon>
        <taxon>Mycobacteriaceae</taxon>
        <taxon>Mycobacterium</taxon>
        <taxon>Mycobacterium ulcerans group</taxon>
    </lineage>
</organism>
<evidence type="ECO:0000255" key="1">
    <source>
        <dbReference type="HAMAP-Rule" id="MF_01373"/>
    </source>
</evidence>
<evidence type="ECO:0000256" key="2">
    <source>
        <dbReference type="SAM" id="MobiDB-lite"/>
    </source>
</evidence>
<protein>
    <recommendedName>
        <fullName evidence="1">Lipoprotein LpqB</fullName>
    </recommendedName>
</protein>
<keyword id="KW-1003">Cell membrane</keyword>
<keyword id="KW-0449">Lipoprotein</keyword>
<keyword id="KW-0472">Membrane</keyword>
<keyword id="KW-0564">Palmitate</keyword>
<keyword id="KW-0732">Signal</keyword>
<dbReference type="EMBL" id="CP000325">
    <property type="protein sequence ID" value="ABL04918.1"/>
    <property type="molecule type" value="Genomic_DNA"/>
</dbReference>
<dbReference type="RefSeq" id="WP_011740533.1">
    <property type="nucleotide sequence ID" value="NC_008611.1"/>
</dbReference>
<dbReference type="SMR" id="A0PRE9"/>
<dbReference type="KEGG" id="mul:MUL_2580"/>
<dbReference type="eggNOG" id="COG5401">
    <property type="taxonomic scope" value="Bacteria"/>
</dbReference>
<dbReference type="HOGENOM" id="CLU_032207_1_0_11"/>
<dbReference type="Proteomes" id="UP000000765">
    <property type="component" value="Chromosome"/>
</dbReference>
<dbReference type="GO" id="GO:0005886">
    <property type="term" value="C:plasma membrane"/>
    <property type="evidence" value="ECO:0007669"/>
    <property type="project" value="UniProtKB-SubCell"/>
</dbReference>
<dbReference type="HAMAP" id="MF_01373">
    <property type="entry name" value="LpqB_lipoprot"/>
    <property type="match status" value="1"/>
</dbReference>
<dbReference type="InterPro" id="IPR019606">
    <property type="entry name" value="GerMN"/>
</dbReference>
<dbReference type="InterPro" id="IPR023959">
    <property type="entry name" value="Lipoprotein_LpqB"/>
</dbReference>
<dbReference type="InterPro" id="IPR018910">
    <property type="entry name" value="Lipoprotein_LpqB_C"/>
</dbReference>
<dbReference type="NCBIfam" id="NF010141">
    <property type="entry name" value="PRK13616.1"/>
    <property type="match status" value="1"/>
</dbReference>
<dbReference type="Pfam" id="PF10646">
    <property type="entry name" value="Germane"/>
    <property type="match status" value="1"/>
</dbReference>
<dbReference type="Pfam" id="PF10647">
    <property type="entry name" value="Gmad1"/>
    <property type="match status" value="1"/>
</dbReference>
<dbReference type="SMART" id="SM00909">
    <property type="entry name" value="Germane"/>
    <property type="match status" value="1"/>
</dbReference>
<dbReference type="PROSITE" id="PS51257">
    <property type="entry name" value="PROKAR_LIPOPROTEIN"/>
    <property type="match status" value="1"/>
</dbReference>
<gene>
    <name evidence="1" type="primary">lpqB</name>
    <name type="ordered locus">MUL_2580</name>
</gene>
<feature type="signal peptide" evidence="1">
    <location>
        <begin position="1"/>
        <end position="17"/>
    </location>
</feature>
<feature type="chain" id="PRO_0000286725" description="Lipoprotein LpqB">
    <location>
        <begin position="18"/>
        <end position="586"/>
    </location>
</feature>
<feature type="region of interest" description="Disordered" evidence="2">
    <location>
        <begin position="26"/>
        <end position="45"/>
    </location>
</feature>
<feature type="lipid moiety-binding region" description="N-palmitoyl cysteine" evidence="1">
    <location>
        <position position="18"/>
    </location>
</feature>
<feature type="lipid moiety-binding region" description="S-diacylglycerol cysteine" evidence="1">
    <location>
        <position position="18"/>
    </location>
</feature>
<accession>A0PRE9</accession>
<proteinExistence type="inferred from homology"/>
<name>LPQB_MYCUA</name>